<proteinExistence type="inferred from homology"/>
<accession>Q63GS5</accession>
<feature type="chain" id="PRO_0000138706" description="Heptaprenylglyceryl phosphate synthase">
    <location>
        <begin position="1"/>
        <end position="229"/>
    </location>
</feature>
<feature type="binding site" evidence="1">
    <location>
        <position position="12"/>
    </location>
    <ligand>
        <name>sn-glycerol 1-phosphate</name>
        <dbReference type="ChEBI" id="CHEBI:57685"/>
    </ligand>
</feature>
<feature type="binding site" evidence="1">
    <location>
        <position position="14"/>
    </location>
    <ligand>
        <name>Mg(2+)</name>
        <dbReference type="ChEBI" id="CHEBI:18420"/>
    </ligand>
</feature>
<feature type="binding site" evidence="1">
    <location>
        <position position="40"/>
    </location>
    <ligand>
        <name>Mg(2+)</name>
        <dbReference type="ChEBI" id="CHEBI:18420"/>
    </ligand>
</feature>
<feature type="binding site" evidence="1">
    <location>
        <begin position="159"/>
        <end position="164"/>
    </location>
    <ligand>
        <name>sn-glycerol 1-phosphate</name>
        <dbReference type="ChEBI" id="CHEBI:57685"/>
    </ligand>
</feature>
<feature type="binding site" evidence="1">
    <location>
        <position position="189"/>
    </location>
    <ligand>
        <name>sn-glycerol 1-phosphate</name>
        <dbReference type="ChEBI" id="CHEBI:57685"/>
    </ligand>
</feature>
<feature type="binding site" evidence="1">
    <location>
        <begin position="209"/>
        <end position="210"/>
    </location>
    <ligand>
        <name>sn-glycerol 1-phosphate</name>
        <dbReference type="ChEBI" id="CHEBI:57685"/>
    </ligand>
</feature>
<gene>
    <name evidence="1" type="primary">pcrB</name>
    <name type="ordered locus">BCE33L0277</name>
</gene>
<comment type="function">
    <text evidence="1">Prenyltransferase that catalyzes in vivo the transfer of the heptaprenyl moiety of heptaprenyl pyrophosphate (HepPP; 35 carbon atoms) to the C3 hydroxyl of sn-glycerol-1-phosphate (G1P), producing heptaprenylglyceryl phosphate (HepGP). This reaction is an ether-bond-formation step in the biosynthesis of archaea-type G1P-based membrane lipids found in Bacillales.</text>
</comment>
<comment type="catalytic activity">
    <reaction evidence="1">
        <text>sn-glycerol 1-phosphate + all-trans-heptaprenyl diphosphate = 3-heptaprenyl-sn-glycero-1-phosphate + diphosphate</text>
        <dbReference type="Rhea" id="RHEA:33495"/>
        <dbReference type="ChEBI" id="CHEBI:33019"/>
        <dbReference type="ChEBI" id="CHEBI:57685"/>
        <dbReference type="ChEBI" id="CHEBI:58206"/>
        <dbReference type="ChEBI" id="CHEBI:64781"/>
        <dbReference type="EC" id="2.5.1.n9"/>
    </reaction>
</comment>
<comment type="cofactor">
    <cofactor evidence="1">
        <name>Mg(2+)</name>
        <dbReference type="ChEBI" id="CHEBI:18420"/>
    </cofactor>
</comment>
<comment type="pathway">
    <text evidence="1">Membrane lipid metabolism; glycerophospholipid metabolism.</text>
</comment>
<comment type="subunit">
    <text evidence="1">Homodimer.</text>
</comment>
<comment type="similarity">
    <text evidence="1">Belongs to the GGGP/HepGP synthase family. Group I subfamily.</text>
</comment>
<dbReference type="EC" id="2.5.1.n9" evidence="1"/>
<dbReference type="EMBL" id="CP000001">
    <property type="protein sequence ID" value="AAU19961.1"/>
    <property type="molecule type" value="Genomic_DNA"/>
</dbReference>
<dbReference type="RefSeq" id="WP_000272090.1">
    <property type="nucleotide sequence ID" value="NZ_CP009968.1"/>
</dbReference>
<dbReference type="SMR" id="Q63GS5"/>
<dbReference type="KEGG" id="bcz:BCE33L0277"/>
<dbReference type="PATRIC" id="fig|288681.22.peg.5332"/>
<dbReference type="UniPathway" id="UPA00940"/>
<dbReference type="Proteomes" id="UP000002612">
    <property type="component" value="Chromosome"/>
</dbReference>
<dbReference type="GO" id="GO:0120536">
    <property type="term" value="F:heptaprenylglyceryl phosphate synthase activity"/>
    <property type="evidence" value="ECO:0007669"/>
    <property type="project" value="RHEA"/>
</dbReference>
<dbReference type="GO" id="GO:0000287">
    <property type="term" value="F:magnesium ion binding"/>
    <property type="evidence" value="ECO:0007669"/>
    <property type="project" value="UniProtKB-UniRule"/>
</dbReference>
<dbReference type="GO" id="GO:0046474">
    <property type="term" value="P:glycerophospholipid biosynthetic process"/>
    <property type="evidence" value="ECO:0007669"/>
    <property type="project" value="UniProtKB-UniRule"/>
</dbReference>
<dbReference type="CDD" id="cd02812">
    <property type="entry name" value="PcrB_like"/>
    <property type="match status" value="1"/>
</dbReference>
<dbReference type="FunFam" id="3.20.20.390:FF:000001">
    <property type="entry name" value="Heptaprenylglyceryl phosphate synthase"/>
    <property type="match status" value="1"/>
</dbReference>
<dbReference type="Gene3D" id="3.20.20.390">
    <property type="entry name" value="FMN-linked oxidoreductases"/>
    <property type="match status" value="1"/>
</dbReference>
<dbReference type="HAMAP" id="MF_00112">
    <property type="entry name" value="GGGP_HepGP_synthase"/>
    <property type="match status" value="1"/>
</dbReference>
<dbReference type="InterPro" id="IPR039074">
    <property type="entry name" value="GGGP/HepGP_synthase_I"/>
</dbReference>
<dbReference type="InterPro" id="IPR038597">
    <property type="entry name" value="GGGP/HepGP_synthase_sf"/>
</dbReference>
<dbReference type="InterPro" id="IPR008205">
    <property type="entry name" value="GGGP_HepGP_synthase"/>
</dbReference>
<dbReference type="NCBIfam" id="TIGR01768">
    <property type="entry name" value="GGGP-family"/>
    <property type="match status" value="1"/>
</dbReference>
<dbReference type="NCBIfam" id="NF003197">
    <property type="entry name" value="PRK04169.1-1"/>
    <property type="match status" value="1"/>
</dbReference>
<dbReference type="NCBIfam" id="NF003199">
    <property type="entry name" value="PRK04169.1-3"/>
    <property type="match status" value="1"/>
</dbReference>
<dbReference type="PANTHER" id="PTHR40029">
    <property type="match status" value="1"/>
</dbReference>
<dbReference type="PANTHER" id="PTHR40029:SF2">
    <property type="entry name" value="HEPTAPRENYLGLYCERYL PHOSPHATE SYNTHASE"/>
    <property type="match status" value="1"/>
</dbReference>
<dbReference type="Pfam" id="PF01884">
    <property type="entry name" value="PcrB"/>
    <property type="match status" value="1"/>
</dbReference>
<dbReference type="SUPFAM" id="SSF51395">
    <property type="entry name" value="FMN-linked oxidoreductases"/>
    <property type="match status" value="1"/>
</dbReference>
<sequence length="229" mass="25544">MYDISGWKHVFKLDPNKELSDEHLEMICESGTDAVIVGGSDGVTIDNVLHMLVSIRRYAVPCVLEVSDVEAITPGFDFYYIPSVLNSRKVEWVTGVHHEALKEFGDIMDWDEIFMEGYCVLNPEAKVAQLTDAKCDVTEDDVIAYARLADKLLRLPIFYLEYSGTYGDVELVKNVKAELKQAKLYYGGGISNAEQAKEMAQYADTVVVGNIIYDDIKAALKTVKAVKGE</sequence>
<name>PCRB_BACCZ</name>
<keyword id="KW-0444">Lipid biosynthesis</keyword>
<keyword id="KW-0443">Lipid metabolism</keyword>
<keyword id="KW-0460">Magnesium</keyword>
<keyword id="KW-0479">Metal-binding</keyword>
<keyword id="KW-0594">Phospholipid biosynthesis</keyword>
<keyword id="KW-1208">Phospholipid metabolism</keyword>
<keyword id="KW-0808">Transferase</keyword>
<protein>
    <recommendedName>
        <fullName evidence="1">Heptaprenylglyceryl phosphate synthase</fullName>
        <shortName evidence="1">HepGP synthase</shortName>
        <ecNumber evidence="1">2.5.1.n9</ecNumber>
    </recommendedName>
    <alternativeName>
        <fullName evidence="1">Glycerol-1-phosphate heptaprenyltransferase</fullName>
    </alternativeName>
</protein>
<organism>
    <name type="scientific">Bacillus cereus (strain ZK / E33L)</name>
    <dbReference type="NCBI Taxonomy" id="288681"/>
    <lineage>
        <taxon>Bacteria</taxon>
        <taxon>Bacillati</taxon>
        <taxon>Bacillota</taxon>
        <taxon>Bacilli</taxon>
        <taxon>Bacillales</taxon>
        <taxon>Bacillaceae</taxon>
        <taxon>Bacillus</taxon>
        <taxon>Bacillus cereus group</taxon>
    </lineage>
</organism>
<evidence type="ECO:0000255" key="1">
    <source>
        <dbReference type="HAMAP-Rule" id="MF_00112"/>
    </source>
</evidence>
<reference key="1">
    <citation type="journal article" date="2006" name="J. Bacteriol.">
        <title>Pathogenomic sequence analysis of Bacillus cereus and Bacillus thuringiensis isolates closely related to Bacillus anthracis.</title>
        <authorList>
            <person name="Han C.S."/>
            <person name="Xie G."/>
            <person name="Challacombe J.F."/>
            <person name="Altherr M.R."/>
            <person name="Bhotika S.S."/>
            <person name="Bruce D."/>
            <person name="Campbell C.S."/>
            <person name="Campbell M.L."/>
            <person name="Chen J."/>
            <person name="Chertkov O."/>
            <person name="Cleland C."/>
            <person name="Dimitrijevic M."/>
            <person name="Doggett N.A."/>
            <person name="Fawcett J.J."/>
            <person name="Glavina T."/>
            <person name="Goodwin L.A."/>
            <person name="Hill K.K."/>
            <person name="Hitchcock P."/>
            <person name="Jackson P.J."/>
            <person name="Keim P."/>
            <person name="Kewalramani A.R."/>
            <person name="Longmire J."/>
            <person name="Lucas S."/>
            <person name="Malfatti S."/>
            <person name="McMurry K."/>
            <person name="Meincke L.J."/>
            <person name="Misra M."/>
            <person name="Moseman B.L."/>
            <person name="Mundt M."/>
            <person name="Munk A.C."/>
            <person name="Okinaka R.T."/>
            <person name="Parson-Quintana B."/>
            <person name="Reilly L.P."/>
            <person name="Richardson P."/>
            <person name="Robinson D.L."/>
            <person name="Rubin E."/>
            <person name="Saunders E."/>
            <person name="Tapia R."/>
            <person name="Tesmer J.G."/>
            <person name="Thayer N."/>
            <person name="Thompson L.S."/>
            <person name="Tice H."/>
            <person name="Ticknor L.O."/>
            <person name="Wills P.L."/>
            <person name="Brettin T.S."/>
            <person name="Gilna P."/>
        </authorList>
    </citation>
    <scope>NUCLEOTIDE SEQUENCE [LARGE SCALE GENOMIC DNA]</scope>
    <source>
        <strain>ZK / E33L</strain>
    </source>
</reference>